<protein>
    <recommendedName>
        <fullName>Glutathione S-transferase theta-1</fullName>
        <ecNumber>2.5.1.18</ecNumber>
    </recommendedName>
    <alternativeName>
        <fullName>GST class-theta</fullName>
    </alternativeName>
    <alternativeName>
        <fullName>GST-CL1</fullName>
    </alternativeName>
</protein>
<proteinExistence type="evidence at protein level"/>
<reference key="1">
    <citation type="journal article" date="1995" name="Biochem. J.">
        <title>Amino acid sequencing, molecular cloning and modelling of the chick liver class-theta glutathione S-transferase CL1.</title>
        <authorList>
            <person name="Hsiao C.D."/>
            <person name="Martsen E.O."/>
            <person name="Lee J.Y."/>
            <person name="Tsai S.-P."/>
            <person name="Tam M.F."/>
        </authorList>
    </citation>
    <scope>NUCLEOTIDE SEQUENCE [MRNA]</scope>
    <source>
        <tissue>Liver</tissue>
    </source>
</reference>
<reference key="2">
    <citation type="journal article" date="1990" name="Biochemistry">
        <title>Characterization of glutathione S-transferases from day-old chick livers.</title>
        <authorList>
            <person name="Chang L.-H."/>
            <person name="Chuang L.-F."/>
            <person name="Tsai C.-P."/>
            <person name="Tu C.-P.D."/>
            <person name="Tam M.F."/>
        </authorList>
    </citation>
    <scope>PROTEIN SEQUENCE OF 2-24</scope>
    <source>
        <tissue>Liver</tissue>
    </source>
</reference>
<evidence type="ECO:0000250" key="1"/>
<evidence type="ECO:0000269" key="2">
    <source>
    </source>
</evidence>
<evidence type="ECO:0000305" key="3"/>
<sequence>MGLELYLDLLSQPCRSIYIFARTNNIPFEFKHVELFKDSVLGKKPAAASGAERPRTGPSNSEGDGKISLLKKVPVLKDGDFTLAECTAILLYLSRKYNTPDHWYPSDIKKRAQVDEYLSWHHANIRANAPKTMWIKVLIPLFTGQPQPSEKLQEVMEGLSTSLKQFEERFLQDKAFIIGSEISLADLVAIVELMQPVGVGCDIFEDRPRLMEWRRRVEEAVGKELFFQAHEMILNIKELSNIQIDPQLKEHLAPVLMKMLK</sequence>
<name>GSTT1_CHICK</name>
<keyword id="KW-0963">Cytoplasm</keyword>
<keyword id="KW-0903">Direct protein sequencing</keyword>
<keyword id="KW-1185">Reference proteome</keyword>
<keyword id="KW-0808">Transferase</keyword>
<feature type="initiator methionine" description="Removed" evidence="2">
    <location>
        <position position="1"/>
    </location>
</feature>
<feature type="chain" id="PRO_0000185944" description="Glutathione S-transferase theta-1">
    <location>
        <begin position="2"/>
        <end position="261"/>
    </location>
</feature>
<feature type="domain" description="GST N-terminal">
    <location>
        <begin position="2"/>
        <end position="101"/>
    </location>
</feature>
<feature type="domain" description="GST C-terminal">
    <location>
        <begin position="107"/>
        <end position="248"/>
    </location>
</feature>
<feature type="binding site" evidence="1">
    <location>
        <begin position="72"/>
        <end position="73"/>
    </location>
    <ligand>
        <name>glutathione</name>
        <dbReference type="ChEBI" id="CHEBI:57925"/>
    </ligand>
</feature>
<feature type="binding site" evidence="1">
    <location>
        <begin position="85"/>
        <end position="86"/>
    </location>
    <ligand>
        <name>glutathione</name>
        <dbReference type="ChEBI" id="CHEBI:57925"/>
    </ligand>
</feature>
<feature type="sequence conflict" description="In Ref. 2; AA sequence." evidence="3" ref="2">
    <original>CRSI</original>
    <variation>SRAV</variation>
    <location>
        <begin position="14"/>
        <end position="17"/>
    </location>
</feature>
<feature type="sequence conflict" description="In Ref. 2; AA sequence." evidence="3" ref="2">
    <original>T</original>
    <variation>S</variation>
    <location>
        <position position="23"/>
    </location>
</feature>
<accession>P20135</accession>
<comment type="function">
    <text>Conjugation of reduced glutathione to a wide number of exogenous and endogenous hydrophobic electrophiles.</text>
</comment>
<comment type="catalytic activity">
    <reaction>
        <text>RX + glutathione = an S-substituted glutathione + a halide anion + H(+)</text>
        <dbReference type="Rhea" id="RHEA:16437"/>
        <dbReference type="ChEBI" id="CHEBI:15378"/>
        <dbReference type="ChEBI" id="CHEBI:16042"/>
        <dbReference type="ChEBI" id="CHEBI:17792"/>
        <dbReference type="ChEBI" id="CHEBI:57925"/>
        <dbReference type="ChEBI" id="CHEBI:90779"/>
        <dbReference type="EC" id="2.5.1.18"/>
    </reaction>
</comment>
<comment type="subunit">
    <text>Homodimer.</text>
</comment>
<comment type="subcellular location">
    <subcellularLocation>
        <location>Cytoplasm</location>
    </subcellularLocation>
</comment>
<comment type="similarity">
    <text evidence="3">Belongs to the GST superfamily. Theta family.</text>
</comment>
<organism>
    <name type="scientific">Gallus gallus</name>
    <name type="common">Chicken</name>
    <dbReference type="NCBI Taxonomy" id="9031"/>
    <lineage>
        <taxon>Eukaryota</taxon>
        <taxon>Metazoa</taxon>
        <taxon>Chordata</taxon>
        <taxon>Craniata</taxon>
        <taxon>Vertebrata</taxon>
        <taxon>Euteleostomi</taxon>
        <taxon>Archelosauria</taxon>
        <taxon>Archosauria</taxon>
        <taxon>Dinosauria</taxon>
        <taxon>Saurischia</taxon>
        <taxon>Theropoda</taxon>
        <taxon>Coelurosauria</taxon>
        <taxon>Aves</taxon>
        <taxon>Neognathae</taxon>
        <taxon>Galloanserae</taxon>
        <taxon>Galliformes</taxon>
        <taxon>Phasianidae</taxon>
        <taxon>Phasianinae</taxon>
        <taxon>Gallus</taxon>
    </lineage>
</organism>
<gene>
    <name type="primary">GSTT1</name>
</gene>
<dbReference type="EC" id="2.5.1.18"/>
<dbReference type="EMBL" id="U13676">
    <property type="protein sequence ID" value="AAA91968.1"/>
    <property type="molecule type" value="mRNA"/>
</dbReference>
<dbReference type="PIR" id="S59629">
    <property type="entry name" value="S59629"/>
</dbReference>
<dbReference type="RefSeq" id="NP_990696.1">
    <property type="nucleotide sequence ID" value="NM_205365.2"/>
</dbReference>
<dbReference type="SMR" id="P20135"/>
<dbReference type="FunCoup" id="P20135">
    <property type="interactions" value="402"/>
</dbReference>
<dbReference type="STRING" id="9031.ENSGALP00000010240"/>
<dbReference type="PaxDb" id="9031-ENSGALP00000010240"/>
<dbReference type="Ensembl" id="ENSGALT00010065584.1">
    <property type="protein sequence ID" value="ENSGALP00010039869.1"/>
    <property type="gene ID" value="ENSGALG00010027050.1"/>
</dbReference>
<dbReference type="GeneID" id="396322"/>
<dbReference type="KEGG" id="gga:396322"/>
<dbReference type="CTD" id="2952"/>
<dbReference type="VEuPathDB" id="HostDB:geneid_396322"/>
<dbReference type="eggNOG" id="KOG0867">
    <property type="taxonomic scope" value="Eukaryota"/>
</dbReference>
<dbReference type="GeneTree" id="ENSGT00940000167527"/>
<dbReference type="HOGENOM" id="CLU_011226_2_0_1"/>
<dbReference type="InParanoid" id="P20135"/>
<dbReference type="OrthoDB" id="422574at2759"/>
<dbReference type="PhylomeDB" id="P20135"/>
<dbReference type="TreeFam" id="TF325759"/>
<dbReference type="Reactome" id="R-GGA-156590">
    <property type="pathway name" value="Glutathione conjugation"/>
</dbReference>
<dbReference type="PRO" id="PR:P20135"/>
<dbReference type="Proteomes" id="UP000000539">
    <property type="component" value="Chromosome 15"/>
</dbReference>
<dbReference type="Bgee" id="ENSGALG00000006344">
    <property type="expression patterns" value="Expressed in heart and 11 other cell types or tissues"/>
</dbReference>
<dbReference type="GO" id="GO:0005737">
    <property type="term" value="C:cytoplasm"/>
    <property type="evidence" value="ECO:0000318"/>
    <property type="project" value="GO_Central"/>
</dbReference>
<dbReference type="GO" id="GO:0004364">
    <property type="term" value="F:glutathione transferase activity"/>
    <property type="evidence" value="ECO:0000318"/>
    <property type="project" value="GO_Central"/>
</dbReference>
<dbReference type="GO" id="GO:0006749">
    <property type="term" value="P:glutathione metabolic process"/>
    <property type="evidence" value="ECO:0000318"/>
    <property type="project" value="GO_Central"/>
</dbReference>
<dbReference type="CDD" id="cd03183">
    <property type="entry name" value="GST_C_Theta"/>
    <property type="match status" value="1"/>
</dbReference>
<dbReference type="CDD" id="cd03050">
    <property type="entry name" value="GST_N_Theta"/>
    <property type="match status" value="1"/>
</dbReference>
<dbReference type="FunFam" id="1.20.1050.10:FF:000008">
    <property type="entry name" value="Glutathione S-transferase theta-1"/>
    <property type="match status" value="1"/>
</dbReference>
<dbReference type="FunFam" id="3.40.30.10:FF:000548">
    <property type="entry name" value="Glutathione S-transferase theta-1"/>
    <property type="match status" value="1"/>
</dbReference>
<dbReference type="Gene3D" id="1.20.1050.10">
    <property type="match status" value="1"/>
</dbReference>
<dbReference type="Gene3D" id="3.40.30.10">
    <property type="entry name" value="Glutaredoxin"/>
    <property type="match status" value="1"/>
</dbReference>
<dbReference type="InterPro" id="IPR010987">
    <property type="entry name" value="Glutathione-S-Trfase_C-like"/>
</dbReference>
<dbReference type="InterPro" id="IPR036282">
    <property type="entry name" value="Glutathione-S-Trfase_C_sf"/>
</dbReference>
<dbReference type="InterPro" id="IPR040079">
    <property type="entry name" value="Glutathione_S-Trfase"/>
</dbReference>
<dbReference type="InterPro" id="IPR004045">
    <property type="entry name" value="Glutathione_S-Trfase_N"/>
</dbReference>
<dbReference type="InterPro" id="IPR004046">
    <property type="entry name" value="GST_C"/>
</dbReference>
<dbReference type="InterPro" id="IPR040077">
    <property type="entry name" value="GST_C_Theta"/>
</dbReference>
<dbReference type="InterPro" id="IPR040075">
    <property type="entry name" value="GST_N_Theta"/>
</dbReference>
<dbReference type="InterPro" id="IPR051369">
    <property type="entry name" value="GST_Theta"/>
</dbReference>
<dbReference type="InterPro" id="IPR036249">
    <property type="entry name" value="Thioredoxin-like_sf"/>
</dbReference>
<dbReference type="PANTHER" id="PTHR43917">
    <property type="match status" value="1"/>
</dbReference>
<dbReference type="PANTHER" id="PTHR43917:SF15">
    <property type="entry name" value="GLUTATHIONE S-TRANSFERASE THETA-1"/>
    <property type="match status" value="1"/>
</dbReference>
<dbReference type="Pfam" id="PF00043">
    <property type="entry name" value="GST_C"/>
    <property type="match status" value="1"/>
</dbReference>
<dbReference type="SFLD" id="SFLDS00019">
    <property type="entry name" value="Glutathione_Transferase_(cytos"/>
    <property type="match status" value="1"/>
</dbReference>
<dbReference type="SFLD" id="SFLDG00358">
    <property type="entry name" value="Main_(cytGST)"/>
    <property type="match status" value="1"/>
</dbReference>
<dbReference type="SUPFAM" id="SSF47616">
    <property type="entry name" value="GST C-terminal domain-like"/>
    <property type="match status" value="1"/>
</dbReference>
<dbReference type="SUPFAM" id="SSF52833">
    <property type="entry name" value="Thioredoxin-like"/>
    <property type="match status" value="1"/>
</dbReference>
<dbReference type="PROSITE" id="PS50405">
    <property type="entry name" value="GST_CTER"/>
    <property type="match status" value="1"/>
</dbReference>
<dbReference type="PROSITE" id="PS50404">
    <property type="entry name" value="GST_NTER"/>
    <property type="match status" value="1"/>
</dbReference>